<comment type="function">
    <text evidence="1">Quinone reductase that provides resistance to thiol-specific stress caused by electrophilic quinones.</text>
</comment>
<comment type="function">
    <text evidence="1">Also exhibits azoreductase activity. Catalyzes the reductive cleavage of the azo bond in aromatic azo compounds to the corresponding amines.</text>
</comment>
<comment type="catalytic activity">
    <reaction evidence="1">
        <text>2 a quinone + NADH + H(+) = 2 a 1,4-benzosemiquinone + NAD(+)</text>
        <dbReference type="Rhea" id="RHEA:65952"/>
        <dbReference type="ChEBI" id="CHEBI:15378"/>
        <dbReference type="ChEBI" id="CHEBI:57540"/>
        <dbReference type="ChEBI" id="CHEBI:57945"/>
        <dbReference type="ChEBI" id="CHEBI:132124"/>
        <dbReference type="ChEBI" id="CHEBI:134225"/>
    </reaction>
</comment>
<comment type="catalytic activity">
    <reaction evidence="1">
        <text>N,N-dimethyl-1,4-phenylenediamine + anthranilate + 2 NAD(+) = 2-(4-dimethylaminophenyl)diazenylbenzoate + 2 NADH + 2 H(+)</text>
        <dbReference type="Rhea" id="RHEA:55872"/>
        <dbReference type="ChEBI" id="CHEBI:15378"/>
        <dbReference type="ChEBI" id="CHEBI:15783"/>
        <dbReference type="ChEBI" id="CHEBI:16567"/>
        <dbReference type="ChEBI" id="CHEBI:57540"/>
        <dbReference type="ChEBI" id="CHEBI:57945"/>
        <dbReference type="ChEBI" id="CHEBI:71579"/>
        <dbReference type="EC" id="1.7.1.17"/>
    </reaction>
</comment>
<comment type="cofactor">
    <cofactor evidence="1">
        <name>FMN</name>
        <dbReference type="ChEBI" id="CHEBI:58210"/>
    </cofactor>
    <text evidence="1">Binds 1 FMN per subunit.</text>
</comment>
<comment type="subunit">
    <text evidence="1">Homodimer.</text>
</comment>
<comment type="similarity">
    <text evidence="1">Belongs to the azoreductase type 1 family.</text>
</comment>
<feature type="chain" id="PRO_0000245951" description="FMN-dependent NADH:quinone oxidoreductase 3">
    <location>
        <begin position="1"/>
        <end position="203"/>
    </location>
</feature>
<feature type="binding site" evidence="1">
    <location>
        <position position="9"/>
    </location>
    <ligand>
        <name>FMN</name>
        <dbReference type="ChEBI" id="CHEBI:58210"/>
    </ligand>
</feature>
<feature type="binding site" evidence="1">
    <location>
        <begin position="15"/>
        <end position="17"/>
    </location>
    <ligand>
        <name>FMN</name>
        <dbReference type="ChEBI" id="CHEBI:58210"/>
    </ligand>
</feature>
<feature type="binding site" evidence="1">
    <location>
        <begin position="95"/>
        <end position="98"/>
    </location>
    <ligand>
        <name>FMN</name>
        <dbReference type="ChEBI" id="CHEBI:58210"/>
    </ligand>
</feature>
<feature type="binding site" evidence="1">
    <location>
        <begin position="139"/>
        <end position="142"/>
    </location>
    <ligand>
        <name>FMN</name>
        <dbReference type="ChEBI" id="CHEBI:58210"/>
    </ligand>
</feature>
<name>AZOR3_PSEPF</name>
<evidence type="ECO:0000255" key="1">
    <source>
        <dbReference type="HAMAP-Rule" id="MF_01216"/>
    </source>
</evidence>
<proteinExistence type="inferred from homology"/>
<accession>Q3KD08</accession>
<reference key="1">
    <citation type="journal article" date="2009" name="Genome Biol.">
        <title>Genomic and genetic analyses of diversity and plant interactions of Pseudomonas fluorescens.</title>
        <authorList>
            <person name="Silby M.W."/>
            <person name="Cerdeno-Tarraga A.M."/>
            <person name="Vernikos G.S."/>
            <person name="Giddens S.R."/>
            <person name="Jackson R.W."/>
            <person name="Preston G.M."/>
            <person name="Zhang X.-X."/>
            <person name="Moon C.D."/>
            <person name="Gehrig S.M."/>
            <person name="Godfrey S.A.C."/>
            <person name="Knight C.G."/>
            <person name="Malone J.G."/>
            <person name="Robinson Z."/>
            <person name="Spiers A.J."/>
            <person name="Harris S."/>
            <person name="Challis G.L."/>
            <person name="Yaxley A.M."/>
            <person name="Harris D."/>
            <person name="Seeger K."/>
            <person name="Murphy L."/>
            <person name="Rutter S."/>
            <person name="Squares R."/>
            <person name="Quail M.A."/>
            <person name="Saunders E."/>
            <person name="Mavromatis K."/>
            <person name="Brettin T.S."/>
            <person name="Bentley S.D."/>
            <person name="Hothersall J."/>
            <person name="Stephens E."/>
            <person name="Thomas C.M."/>
            <person name="Parkhill J."/>
            <person name="Levy S.B."/>
            <person name="Rainey P.B."/>
            <person name="Thomson N.R."/>
        </authorList>
    </citation>
    <scope>NUCLEOTIDE SEQUENCE [LARGE SCALE GENOMIC DNA]</scope>
    <source>
        <strain>Pf0-1</strain>
    </source>
</reference>
<sequence length="203" mass="21312">MKLLHIDSSILGDNSASRQLSSQVTKAWQAAEPSAVVTYRDLAADAISHFSSTTLVAAGTTAELRNAAQQHEAELSATTLAEFITADAIVVAAPMYNFTVPTQLKAWIDRIAVAGQTFRYTEAGPEGLCGGKKVVIVSTAGGIHAGQASGVAHEDYLKLVFGFLGITDIEVVRAEGLAYGEEVRNNAMSAAQAKISEQLFAAA</sequence>
<gene>
    <name evidence="1" type="primary">azoR3</name>
    <name type="ordered locus">Pfl01_2606</name>
</gene>
<organism>
    <name type="scientific">Pseudomonas fluorescens (strain Pf0-1)</name>
    <dbReference type="NCBI Taxonomy" id="205922"/>
    <lineage>
        <taxon>Bacteria</taxon>
        <taxon>Pseudomonadati</taxon>
        <taxon>Pseudomonadota</taxon>
        <taxon>Gammaproteobacteria</taxon>
        <taxon>Pseudomonadales</taxon>
        <taxon>Pseudomonadaceae</taxon>
        <taxon>Pseudomonas</taxon>
    </lineage>
</organism>
<dbReference type="EC" id="1.6.5.-" evidence="1"/>
<dbReference type="EC" id="1.7.1.17" evidence="1"/>
<dbReference type="EMBL" id="CP000094">
    <property type="protein sequence ID" value="ABA74347.1"/>
    <property type="molecule type" value="Genomic_DNA"/>
</dbReference>
<dbReference type="RefSeq" id="WP_011334021.1">
    <property type="nucleotide sequence ID" value="NC_007492.2"/>
</dbReference>
<dbReference type="SMR" id="Q3KD08"/>
<dbReference type="KEGG" id="pfo:Pfl01_2606"/>
<dbReference type="eggNOG" id="COG1182">
    <property type="taxonomic scope" value="Bacteria"/>
</dbReference>
<dbReference type="HOGENOM" id="CLU_088964_0_0_6"/>
<dbReference type="Proteomes" id="UP000002704">
    <property type="component" value="Chromosome"/>
</dbReference>
<dbReference type="GO" id="GO:0009055">
    <property type="term" value="F:electron transfer activity"/>
    <property type="evidence" value="ECO:0007669"/>
    <property type="project" value="UniProtKB-UniRule"/>
</dbReference>
<dbReference type="GO" id="GO:0010181">
    <property type="term" value="F:FMN binding"/>
    <property type="evidence" value="ECO:0007669"/>
    <property type="project" value="UniProtKB-UniRule"/>
</dbReference>
<dbReference type="GO" id="GO:0016652">
    <property type="term" value="F:oxidoreductase activity, acting on NAD(P)H as acceptor"/>
    <property type="evidence" value="ECO:0007669"/>
    <property type="project" value="UniProtKB-UniRule"/>
</dbReference>
<dbReference type="GO" id="GO:0016655">
    <property type="term" value="F:oxidoreductase activity, acting on NAD(P)H, quinone or similar compound as acceptor"/>
    <property type="evidence" value="ECO:0007669"/>
    <property type="project" value="InterPro"/>
</dbReference>
<dbReference type="Gene3D" id="3.40.50.360">
    <property type="match status" value="1"/>
</dbReference>
<dbReference type="HAMAP" id="MF_01216">
    <property type="entry name" value="Azoreductase_type1"/>
    <property type="match status" value="1"/>
</dbReference>
<dbReference type="InterPro" id="IPR003680">
    <property type="entry name" value="Flavodoxin_fold"/>
</dbReference>
<dbReference type="InterPro" id="IPR029039">
    <property type="entry name" value="Flavoprotein-like_sf"/>
</dbReference>
<dbReference type="InterPro" id="IPR050104">
    <property type="entry name" value="FMN-dep_NADH:Q_OxRdtase_AzoR1"/>
</dbReference>
<dbReference type="InterPro" id="IPR023048">
    <property type="entry name" value="NADH:quinone_OxRdtase_FMN_depd"/>
</dbReference>
<dbReference type="PANTHER" id="PTHR43741">
    <property type="entry name" value="FMN-DEPENDENT NADH-AZOREDUCTASE 1"/>
    <property type="match status" value="1"/>
</dbReference>
<dbReference type="PANTHER" id="PTHR43741:SF4">
    <property type="entry name" value="FMN-DEPENDENT NADH:QUINONE OXIDOREDUCTASE"/>
    <property type="match status" value="1"/>
</dbReference>
<dbReference type="Pfam" id="PF02525">
    <property type="entry name" value="Flavodoxin_2"/>
    <property type="match status" value="1"/>
</dbReference>
<dbReference type="SUPFAM" id="SSF52218">
    <property type="entry name" value="Flavoproteins"/>
    <property type="match status" value="1"/>
</dbReference>
<protein>
    <recommendedName>
        <fullName evidence="1">FMN-dependent NADH:quinone oxidoreductase 3</fullName>
        <ecNumber evidence="1">1.6.5.-</ecNumber>
    </recommendedName>
    <alternativeName>
        <fullName evidence="1">Azo-dye reductase 3</fullName>
    </alternativeName>
    <alternativeName>
        <fullName evidence="1">FMN-dependent NADH-azo compound oxidoreductase 3</fullName>
    </alternativeName>
    <alternativeName>
        <fullName evidence="1">FMN-dependent NADH-azoreductase 3</fullName>
        <ecNumber evidence="1">1.7.1.17</ecNumber>
    </alternativeName>
</protein>
<keyword id="KW-0285">Flavoprotein</keyword>
<keyword id="KW-0288">FMN</keyword>
<keyword id="KW-0520">NAD</keyword>
<keyword id="KW-0560">Oxidoreductase</keyword>